<dbReference type="EC" id="2.7.4.22" evidence="1"/>
<dbReference type="EMBL" id="AE007317">
    <property type="protein sequence ID" value="AAK99649.1"/>
    <property type="molecule type" value="Genomic_DNA"/>
</dbReference>
<dbReference type="PIR" id="E97977">
    <property type="entry name" value="E97977"/>
</dbReference>
<dbReference type="RefSeq" id="NP_358439.1">
    <property type="nucleotide sequence ID" value="NC_003098.1"/>
</dbReference>
<dbReference type="SMR" id="Q8DQ50"/>
<dbReference type="STRING" id="171101.spr0845"/>
<dbReference type="KEGG" id="spr:spr0845"/>
<dbReference type="PATRIC" id="fig|171101.6.peg.933"/>
<dbReference type="eggNOG" id="COG0528">
    <property type="taxonomic scope" value="Bacteria"/>
</dbReference>
<dbReference type="HOGENOM" id="CLU_033861_0_0_9"/>
<dbReference type="UniPathway" id="UPA00159">
    <property type="reaction ID" value="UER00275"/>
</dbReference>
<dbReference type="Proteomes" id="UP000000586">
    <property type="component" value="Chromosome"/>
</dbReference>
<dbReference type="GO" id="GO:0005737">
    <property type="term" value="C:cytoplasm"/>
    <property type="evidence" value="ECO:0007669"/>
    <property type="project" value="UniProtKB-SubCell"/>
</dbReference>
<dbReference type="GO" id="GO:0005524">
    <property type="term" value="F:ATP binding"/>
    <property type="evidence" value="ECO:0007669"/>
    <property type="project" value="UniProtKB-KW"/>
</dbReference>
<dbReference type="GO" id="GO:0033862">
    <property type="term" value="F:UMP kinase activity"/>
    <property type="evidence" value="ECO:0000318"/>
    <property type="project" value="GO_Central"/>
</dbReference>
<dbReference type="GO" id="GO:0044210">
    <property type="term" value="P:'de novo' CTP biosynthetic process"/>
    <property type="evidence" value="ECO:0007669"/>
    <property type="project" value="UniProtKB-UniRule"/>
</dbReference>
<dbReference type="GO" id="GO:0006225">
    <property type="term" value="P:UDP biosynthetic process"/>
    <property type="evidence" value="ECO:0000318"/>
    <property type="project" value="GO_Central"/>
</dbReference>
<dbReference type="CDD" id="cd04254">
    <property type="entry name" value="AAK_UMPK-PyrH-Ec"/>
    <property type="match status" value="1"/>
</dbReference>
<dbReference type="FunFam" id="3.40.1160.10:FF:000019">
    <property type="entry name" value="Uridylate kinase"/>
    <property type="match status" value="1"/>
</dbReference>
<dbReference type="Gene3D" id="3.40.1160.10">
    <property type="entry name" value="Acetylglutamate kinase-like"/>
    <property type="match status" value="1"/>
</dbReference>
<dbReference type="HAMAP" id="MF_01220_B">
    <property type="entry name" value="PyrH_B"/>
    <property type="match status" value="1"/>
</dbReference>
<dbReference type="InterPro" id="IPR036393">
    <property type="entry name" value="AceGlu_kinase-like_sf"/>
</dbReference>
<dbReference type="InterPro" id="IPR001048">
    <property type="entry name" value="Asp/Glu/Uridylate_kinase"/>
</dbReference>
<dbReference type="InterPro" id="IPR011817">
    <property type="entry name" value="Uridylate_kinase"/>
</dbReference>
<dbReference type="InterPro" id="IPR015963">
    <property type="entry name" value="Uridylate_kinase_bac"/>
</dbReference>
<dbReference type="NCBIfam" id="TIGR02075">
    <property type="entry name" value="pyrH_bact"/>
    <property type="match status" value="1"/>
</dbReference>
<dbReference type="PANTHER" id="PTHR42833">
    <property type="entry name" value="URIDYLATE KINASE"/>
    <property type="match status" value="1"/>
</dbReference>
<dbReference type="PANTHER" id="PTHR42833:SF4">
    <property type="entry name" value="URIDYLATE KINASE PUMPKIN, CHLOROPLASTIC"/>
    <property type="match status" value="1"/>
</dbReference>
<dbReference type="Pfam" id="PF00696">
    <property type="entry name" value="AA_kinase"/>
    <property type="match status" value="1"/>
</dbReference>
<dbReference type="PIRSF" id="PIRSF005650">
    <property type="entry name" value="Uridylate_kin"/>
    <property type="match status" value="1"/>
</dbReference>
<dbReference type="SUPFAM" id="SSF53633">
    <property type="entry name" value="Carbamate kinase-like"/>
    <property type="match status" value="1"/>
</dbReference>
<reference key="1">
    <citation type="journal article" date="2001" name="J. Bacteriol.">
        <title>Genome of the bacterium Streptococcus pneumoniae strain R6.</title>
        <authorList>
            <person name="Hoskins J."/>
            <person name="Alborn W.E. Jr."/>
            <person name="Arnold J."/>
            <person name="Blaszczak L.C."/>
            <person name="Burgett S."/>
            <person name="DeHoff B.S."/>
            <person name="Estrem S.T."/>
            <person name="Fritz L."/>
            <person name="Fu D.-J."/>
            <person name="Fuller W."/>
            <person name="Geringer C."/>
            <person name="Gilmour R."/>
            <person name="Glass J.S."/>
            <person name="Khoja H."/>
            <person name="Kraft A.R."/>
            <person name="Lagace R.E."/>
            <person name="LeBlanc D.J."/>
            <person name="Lee L.N."/>
            <person name="Lefkowitz E.J."/>
            <person name="Lu J."/>
            <person name="Matsushima P."/>
            <person name="McAhren S.M."/>
            <person name="McHenney M."/>
            <person name="McLeaster K."/>
            <person name="Mundy C.W."/>
            <person name="Nicas T.I."/>
            <person name="Norris F.H."/>
            <person name="O'Gara M."/>
            <person name="Peery R.B."/>
            <person name="Robertson G.T."/>
            <person name="Rockey P."/>
            <person name="Sun P.-M."/>
            <person name="Winkler M.E."/>
            <person name="Yang Y."/>
            <person name="Young-Bellido M."/>
            <person name="Zhao G."/>
            <person name="Zook C.A."/>
            <person name="Baltz R.H."/>
            <person name="Jaskunas S.R."/>
            <person name="Rosteck P.R. Jr."/>
            <person name="Skatrud P.L."/>
            <person name="Glass J.I."/>
        </authorList>
    </citation>
    <scope>NUCLEOTIDE SEQUENCE [LARGE SCALE GENOMIC DNA]</scope>
    <source>
        <strain>ATCC BAA-255 / R6</strain>
    </source>
</reference>
<comment type="function">
    <text evidence="1">Catalyzes the reversible phosphorylation of UMP to UDP.</text>
</comment>
<comment type="catalytic activity">
    <reaction evidence="1">
        <text>UMP + ATP = UDP + ADP</text>
        <dbReference type="Rhea" id="RHEA:24400"/>
        <dbReference type="ChEBI" id="CHEBI:30616"/>
        <dbReference type="ChEBI" id="CHEBI:57865"/>
        <dbReference type="ChEBI" id="CHEBI:58223"/>
        <dbReference type="ChEBI" id="CHEBI:456216"/>
        <dbReference type="EC" id="2.7.4.22"/>
    </reaction>
</comment>
<comment type="activity regulation">
    <text evidence="1">Allosterically activated by GTP. Inhibited by UTP.</text>
</comment>
<comment type="pathway">
    <text evidence="1">Pyrimidine metabolism; CTP biosynthesis via de novo pathway; UDP from UMP (UMPK route): step 1/1.</text>
</comment>
<comment type="subunit">
    <text evidence="1">Homohexamer.</text>
</comment>
<comment type="subcellular location">
    <subcellularLocation>
        <location evidence="1">Cytoplasm</location>
    </subcellularLocation>
</comment>
<comment type="similarity">
    <text evidence="1">Belongs to the UMP kinase family.</text>
</comment>
<evidence type="ECO:0000255" key="1">
    <source>
        <dbReference type="HAMAP-Rule" id="MF_01220"/>
    </source>
</evidence>
<sequence length="247" mass="26693">MKMANPKYKRILIKLSGEALAGERGVGIDIQTVQTIAKEIQEVHSLGIEIALVIGGGNLWRGEPAAEAGMDRVQADYTGMLGTVMNALVMADSLQQVGVDTRVQTAIAMQQVAEPYVRGRALRHLEKGRIVIFGAGIGSPYFSTDTTAALRAAEIEADAILMAKNGVDGVYNADPKKDKTAVKFEELTHRDVINKGLRIMDSTASTLSMDNDIDLVVFNMNQSGNIKRVVFGENIGTTVSNNIEEKE</sequence>
<accession>Q8DQ50</accession>
<feature type="chain" id="PRO_0000143893" description="Uridylate kinase">
    <location>
        <begin position="1"/>
        <end position="247"/>
    </location>
</feature>
<feature type="region of interest" description="Involved in allosteric activation by GTP" evidence="1">
    <location>
        <begin position="22"/>
        <end position="27"/>
    </location>
</feature>
<feature type="binding site" evidence="1">
    <location>
        <begin position="14"/>
        <end position="17"/>
    </location>
    <ligand>
        <name>ATP</name>
        <dbReference type="ChEBI" id="CHEBI:30616"/>
    </ligand>
</feature>
<feature type="binding site" evidence="1">
    <location>
        <position position="56"/>
    </location>
    <ligand>
        <name>UMP</name>
        <dbReference type="ChEBI" id="CHEBI:57865"/>
    </ligand>
</feature>
<feature type="binding site" evidence="1">
    <location>
        <position position="57"/>
    </location>
    <ligand>
        <name>ATP</name>
        <dbReference type="ChEBI" id="CHEBI:30616"/>
    </ligand>
</feature>
<feature type="binding site" evidence="1">
    <location>
        <position position="61"/>
    </location>
    <ligand>
        <name>ATP</name>
        <dbReference type="ChEBI" id="CHEBI:30616"/>
    </ligand>
</feature>
<feature type="binding site" evidence="1">
    <location>
        <position position="76"/>
    </location>
    <ligand>
        <name>UMP</name>
        <dbReference type="ChEBI" id="CHEBI:57865"/>
    </ligand>
</feature>
<feature type="binding site" evidence="1">
    <location>
        <begin position="137"/>
        <end position="144"/>
    </location>
    <ligand>
        <name>UMP</name>
        <dbReference type="ChEBI" id="CHEBI:57865"/>
    </ligand>
</feature>
<feature type="binding site" evidence="1">
    <location>
        <position position="165"/>
    </location>
    <ligand>
        <name>ATP</name>
        <dbReference type="ChEBI" id="CHEBI:30616"/>
    </ligand>
</feature>
<feature type="binding site" evidence="1">
    <location>
        <position position="171"/>
    </location>
    <ligand>
        <name>ATP</name>
        <dbReference type="ChEBI" id="CHEBI:30616"/>
    </ligand>
</feature>
<feature type="binding site" evidence="1">
    <location>
        <position position="174"/>
    </location>
    <ligand>
        <name>ATP</name>
        <dbReference type="ChEBI" id="CHEBI:30616"/>
    </ligand>
</feature>
<protein>
    <recommendedName>
        <fullName evidence="1">Uridylate kinase</fullName>
        <shortName evidence="1">UK</shortName>
        <ecNumber evidence="1">2.7.4.22</ecNumber>
    </recommendedName>
    <alternativeName>
        <fullName evidence="1">Uridine monophosphate kinase</fullName>
        <shortName evidence="1">UMP kinase</shortName>
        <shortName evidence="1">UMPK</shortName>
    </alternativeName>
</protein>
<proteinExistence type="inferred from homology"/>
<organism>
    <name type="scientific">Streptococcus pneumoniae (strain ATCC BAA-255 / R6)</name>
    <dbReference type="NCBI Taxonomy" id="171101"/>
    <lineage>
        <taxon>Bacteria</taxon>
        <taxon>Bacillati</taxon>
        <taxon>Bacillota</taxon>
        <taxon>Bacilli</taxon>
        <taxon>Lactobacillales</taxon>
        <taxon>Streptococcaceae</taxon>
        <taxon>Streptococcus</taxon>
    </lineage>
</organism>
<keyword id="KW-0021">Allosteric enzyme</keyword>
<keyword id="KW-0067">ATP-binding</keyword>
<keyword id="KW-0963">Cytoplasm</keyword>
<keyword id="KW-0418">Kinase</keyword>
<keyword id="KW-0547">Nucleotide-binding</keyword>
<keyword id="KW-0665">Pyrimidine biosynthesis</keyword>
<keyword id="KW-1185">Reference proteome</keyword>
<keyword id="KW-0808">Transferase</keyword>
<name>PYRH_STRR6</name>
<gene>
    <name evidence="1" type="primary">pyrH</name>
    <name type="ordered locus">spr0845</name>
</gene>